<dbReference type="EMBL" id="CP000727">
    <property type="protein sequence ID" value="ABS37399.1"/>
    <property type="molecule type" value="Genomic_DNA"/>
</dbReference>
<dbReference type="EMBL" id="AM412317">
    <property type="protein sequence ID" value="CAL84084.1"/>
    <property type="molecule type" value="Genomic_DNA"/>
</dbReference>
<dbReference type="RefSeq" id="WP_003399430.1">
    <property type="nucleotide sequence ID" value="NC_009698.1"/>
</dbReference>
<dbReference type="RefSeq" id="YP_001255028.1">
    <property type="nucleotide sequence ID" value="NC_009495.1"/>
</dbReference>
<dbReference type="RefSeq" id="YP_001388231.1">
    <property type="nucleotide sequence ID" value="NC_009698.1"/>
</dbReference>
<dbReference type="SMR" id="A5I4W1"/>
<dbReference type="GeneID" id="5186785"/>
<dbReference type="KEGG" id="cbh:CLC_2388"/>
<dbReference type="KEGG" id="cbo:CBO2530"/>
<dbReference type="PATRIC" id="fig|413999.7.peg.2510"/>
<dbReference type="HOGENOM" id="CLU_108412_0_0_9"/>
<dbReference type="PRO" id="PR:A5I4W1"/>
<dbReference type="Proteomes" id="UP000001986">
    <property type="component" value="Chromosome"/>
</dbReference>
<dbReference type="GO" id="GO:0005524">
    <property type="term" value="F:ATP binding"/>
    <property type="evidence" value="ECO:0007669"/>
    <property type="project" value="UniProtKB-KW"/>
</dbReference>
<dbReference type="GO" id="GO:0003690">
    <property type="term" value="F:double-stranded DNA binding"/>
    <property type="evidence" value="ECO:0000318"/>
    <property type="project" value="GO_Central"/>
</dbReference>
<dbReference type="GO" id="GO:0008270">
    <property type="term" value="F:zinc ion binding"/>
    <property type="evidence" value="ECO:0007669"/>
    <property type="project" value="UniProtKB-UniRule"/>
</dbReference>
<dbReference type="GO" id="GO:0045892">
    <property type="term" value="P:negative regulation of DNA-templated transcription"/>
    <property type="evidence" value="ECO:0000318"/>
    <property type="project" value="GO_Central"/>
</dbReference>
<dbReference type="HAMAP" id="MF_00440">
    <property type="entry name" value="NrdR"/>
    <property type="match status" value="1"/>
</dbReference>
<dbReference type="InterPro" id="IPR005144">
    <property type="entry name" value="ATP-cone_dom"/>
</dbReference>
<dbReference type="InterPro" id="IPR055173">
    <property type="entry name" value="NrdR-like_N"/>
</dbReference>
<dbReference type="InterPro" id="IPR003796">
    <property type="entry name" value="RNR_NrdR-like"/>
</dbReference>
<dbReference type="NCBIfam" id="TIGR00244">
    <property type="entry name" value="transcriptional regulator NrdR"/>
    <property type="match status" value="1"/>
</dbReference>
<dbReference type="PANTHER" id="PTHR30455">
    <property type="entry name" value="TRANSCRIPTIONAL REPRESSOR NRDR"/>
    <property type="match status" value="1"/>
</dbReference>
<dbReference type="PANTHER" id="PTHR30455:SF2">
    <property type="entry name" value="TRANSCRIPTIONAL REPRESSOR NRDR"/>
    <property type="match status" value="1"/>
</dbReference>
<dbReference type="Pfam" id="PF03477">
    <property type="entry name" value="ATP-cone"/>
    <property type="match status" value="1"/>
</dbReference>
<dbReference type="Pfam" id="PF22811">
    <property type="entry name" value="Zn_ribbon_NrdR"/>
    <property type="match status" value="1"/>
</dbReference>
<dbReference type="PROSITE" id="PS51161">
    <property type="entry name" value="ATP_CONE"/>
    <property type="match status" value="1"/>
</dbReference>
<comment type="function">
    <text evidence="1">Negatively regulates transcription of bacterial ribonucleotide reductase nrd genes and operons by binding to NrdR-boxes.</text>
</comment>
<comment type="cofactor">
    <cofactor evidence="1">
        <name>Zn(2+)</name>
        <dbReference type="ChEBI" id="CHEBI:29105"/>
    </cofactor>
    <text evidence="1">Binds 1 zinc ion.</text>
</comment>
<comment type="similarity">
    <text evidence="1">Belongs to the NrdR family.</text>
</comment>
<protein>
    <recommendedName>
        <fullName evidence="1">Transcriptional repressor NrdR</fullName>
    </recommendedName>
</protein>
<name>NRDR_CLOBH</name>
<feature type="chain" id="PRO_1000124484" description="Transcriptional repressor NrdR">
    <location>
        <begin position="1"/>
        <end position="151"/>
    </location>
</feature>
<feature type="domain" description="ATP-cone" evidence="1">
    <location>
        <begin position="49"/>
        <end position="139"/>
    </location>
</feature>
<feature type="zinc finger region" evidence="1">
    <location>
        <begin position="3"/>
        <end position="34"/>
    </location>
</feature>
<reference key="1">
    <citation type="journal article" date="2007" name="Genome Res.">
        <title>Genome sequence of a proteolytic (Group I) Clostridium botulinum strain Hall A and comparative analysis of the clostridial genomes.</title>
        <authorList>
            <person name="Sebaihia M."/>
            <person name="Peck M.W."/>
            <person name="Minton N.P."/>
            <person name="Thomson N.R."/>
            <person name="Holden M.T.G."/>
            <person name="Mitchell W.J."/>
            <person name="Carter A.T."/>
            <person name="Bentley S.D."/>
            <person name="Mason D.R."/>
            <person name="Crossman L."/>
            <person name="Paul C.J."/>
            <person name="Ivens A."/>
            <person name="Wells-Bennik M.H.J."/>
            <person name="Davis I.J."/>
            <person name="Cerdeno-Tarraga A.M."/>
            <person name="Churcher C."/>
            <person name="Quail M.A."/>
            <person name="Chillingworth T."/>
            <person name="Feltwell T."/>
            <person name="Fraser A."/>
            <person name="Goodhead I."/>
            <person name="Hance Z."/>
            <person name="Jagels K."/>
            <person name="Larke N."/>
            <person name="Maddison M."/>
            <person name="Moule S."/>
            <person name="Mungall K."/>
            <person name="Norbertczak H."/>
            <person name="Rabbinowitsch E."/>
            <person name="Sanders M."/>
            <person name="Simmonds M."/>
            <person name="White B."/>
            <person name="Whithead S."/>
            <person name="Parkhill J."/>
        </authorList>
    </citation>
    <scope>NUCLEOTIDE SEQUENCE [LARGE SCALE GENOMIC DNA]</scope>
    <source>
        <strain>Hall / ATCC 3502 / NCTC 13319 / Type A</strain>
    </source>
</reference>
<reference key="2">
    <citation type="journal article" date="2007" name="PLoS ONE">
        <title>Analysis of the neurotoxin complex genes in Clostridium botulinum A1-A4 and B1 strains: BoNT/A3, /Ba4 and /B1 clusters are located within plasmids.</title>
        <authorList>
            <person name="Smith T.J."/>
            <person name="Hill K.K."/>
            <person name="Foley B.T."/>
            <person name="Detter J.C."/>
            <person name="Munk A.C."/>
            <person name="Bruce D.C."/>
            <person name="Doggett N.A."/>
            <person name="Smith L.A."/>
            <person name="Marks J.D."/>
            <person name="Xie G."/>
            <person name="Brettin T.S."/>
        </authorList>
    </citation>
    <scope>NUCLEOTIDE SEQUENCE [LARGE SCALE GENOMIC DNA]</scope>
    <source>
        <strain>Hall / ATCC 3502 / NCTC 13319 / Type A</strain>
    </source>
</reference>
<sequence>MKCPYCAYGESKVVDSRSTEDGSSIRRRRECLKCNRRYTTYEKIETTPILVIKKNMSREYFDRNKIVNGLMKACQKRPVSRKQIEQIANEVERHISNEMLTEVNTDKIGQIIMKNLKKIDEVSYVRFASVYRQFKDINTFMEEIKNLMDKN</sequence>
<accession>A5I4W1</accession>
<accession>A7G616</accession>
<keyword id="KW-0067">ATP-binding</keyword>
<keyword id="KW-0238">DNA-binding</keyword>
<keyword id="KW-0479">Metal-binding</keyword>
<keyword id="KW-0547">Nucleotide-binding</keyword>
<keyword id="KW-1185">Reference proteome</keyword>
<keyword id="KW-0678">Repressor</keyword>
<keyword id="KW-0804">Transcription</keyword>
<keyword id="KW-0805">Transcription regulation</keyword>
<keyword id="KW-0862">Zinc</keyword>
<keyword id="KW-0863">Zinc-finger</keyword>
<proteinExistence type="inferred from homology"/>
<gene>
    <name evidence="1" type="primary">nrdR</name>
    <name type="ordered locus">CBO2530</name>
    <name type="ordered locus">CLC_2388</name>
</gene>
<evidence type="ECO:0000255" key="1">
    <source>
        <dbReference type="HAMAP-Rule" id="MF_00440"/>
    </source>
</evidence>
<organism>
    <name type="scientific">Clostridium botulinum (strain Hall / ATCC 3502 / NCTC 13319 / Type A)</name>
    <dbReference type="NCBI Taxonomy" id="441771"/>
    <lineage>
        <taxon>Bacteria</taxon>
        <taxon>Bacillati</taxon>
        <taxon>Bacillota</taxon>
        <taxon>Clostridia</taxon>
        <taxon>Eubacteriales</taxon>
        <taxon>Clostridiaceae</taxon>
        <taxon>Clostridium</taxon>
    </lineage>
</organism>